<gene>
    <name type="primary">mauD</name>
    <name type="ordered locus">MexAM1_META1p2772</name>
</gene>
<proteinExistence type="predicted"/>
<accession>Q49126</accession>
<accession>C5ATK6</accession>
<keyword id="KW-0472">Membrane</keyword>
<keyword id="KW-1185">Reference proteome</keyword>
<keyword id="KW-0812">Transmembrane</keyword>
<keyword id="KW-1133">Transmembrane helix</keyword>
<dbReference type="EMBL" id="L26406">
    <property type="protein sequence ID" value="AAB46935.1"/>
    <property type="molecule type" value="Genomic_DNA"/>
</dbReference>
<dbReference type="EMBL" id="CP001510">
    <property type="protein sequence ID" value="ACS40530.1"/>
    <property type="molecule type" value="Genomic_DNA"/>
</dbReference>
<dbReference type="EMBL" id="M57963">
    <property type="status" value="NOT_ANNOTATED_CDS"/>
    <property type="molecule type" value="Genomic_DNA"/>
</dbReference>
<dbReference type="PIR" id="A38123">
    <property type="entry name" value="A38123"/>
</dbReference>
<dbReference type="RefSeq" id="WP_012753045.1">
    <property type="nucleotide sequence ID" value="NC_012808.1"/>
</dbReference>
<dbReference type="SMR" id="Q49126"/>
<dbReference type="STRING" id="272630.MexAM1_META1p2772"/>
<dbReference type="KEGG" id="mea:Mex_1p2772"/>
<dbReference type="eggNOG" id="COG1225">
    <property type="taxonomic scope" value="Bacteria"/>
</dbReference>
<dbReference type="HOGENOM" id="CLU_091361_0_0_5"/>
<dbReference type="OrthoDB" id="462848at2"/>
<dbReference type="UniPathway" id="UPA00895"/>
<dbReference type="Proteomes" id="UP000009081">
    <property type="component" value="Chromosome"/>
</dbReference>
<dbReference type="GO" id="GO:0016020">
    <property type="term" value="C:membrane"/>
    <property type="evidence" value="ECO:0007669"/>
    <property type="project" value="UniProtKB-SubCell"/>
</dbReference>
<dbReference type="GO" id="GO:0016209">
    <property type="term" value="F:antioxidant activity"/>
    <property type="evidence" value="ECO:0007669"/>
    <property type="project" value="InterPro"/>
</dbReference>
<dbReference type="GO" id="GO:0016491">
    <property type="term" value="F:oxidoreductase activity"/>
    <property type="evidence" value="ECO:0007669"/>
    <property type="project" value="InterPro"/>
</dbReference>
<dbReference type="GO" id="GO:0030416">
    <property type="term" value="P:methylamine metabolic process"/>
    <property type="evidence" value="ECO:0007669"/>
    <property type="project" value="InterPro"/>
</dbReference>
<dbReference type="CDD" id="cd02967">
    <property type="entry name" value="mauD"/>
    <property type="match status" value="1"/>
</dbReference>
<dbReference type="Gene3D" id="3.40.30.10">
    <property type="entry name" value="Glutaredoxin"/>
    <property type="match status" value="1"/>
</dbReference>
<dbReference type="InterPro" id="IPR000866">
    <property type="entry name" value="AhpC/TSA"/>
</dbReference>
<dbReference type="InterPro" id="IPR013478">
    <property type="entry name" value="MeN_DH_accessory"/>
</dbReference>
<dbReference type="InterPro" id="IPR036249">
    <property type="entry name" value="Thioredoxin-like_sf"/>
</dbReference>
<dbReference type="InterPro" id="IPR013766">
    <property type="entry name" value="Thioredoxin_domain"/>
</dbReference>
<dbReference type="InterPro" id="IPR050553">
    <property type="entry name" value="Thioredoxin_ResA/DsbE_sf"/>
</dbReference>
<dbReference type="NCBIfam" id="TIGR02661">
    <property type="entry name" value="MauD"/>
    <property type="match status" value="1"/>
</dbReference>
<dbReference type="PANTHER" id="PTHR42852">
    <property type="entry name" value="THIOL:DISULFIDE INTERCHANGE PROTEIN DSBE"/>
    <property type="match status" value="1"/>
</dbReference>
<dbReference type="PANTHER" id="PTHR42852:SF17">
    <property type="entry name" value="THIOREDOXIN-LIKE PROTEIN HI_1115"/>
    <property type="match status" value="1"/>
</dbReference>
<dbReference type="Pfam" id="PF00578">
    <property type="entry name" value="AhpC-TSA"/>
    <property type="match status" value="1"/>
</dbReference>
<dbReference type="SUPFAM" id="SSF52833">
    <property type="entry name" value="Thioredoxin-like"/>
    <property type="match status" value="1"/>
</dbReference>
<dbReference type="PROSITE" id="PS51352">
    <property type="entry name" value="THIOREDOXIN_2"/>
    <property type="match status" value="1"/>
</dbReference>
<name>MAUD_METEA</name>
<comment type="function">
    <text>May be specifically involved in the processing, transport, and/or maturation of the MADH beta-subunit.</text>
</comment>
<comment type="pathway">
    <text>One-carbon metabolism; methylamine degradation.</text>
</comment>
<comment type="subcellular location">
    <subcellularLocation>
        <location evidence="3">Membrane</location>
        <topology evidence="3">Single-pass membrane protein</topology>
    </subcellularLocation>
</comment>
<evidence type="ECO:0000255" key="1"/>
<evidence type="ECO:0000255" key="2">
    <source>
        <dbReference type="PROSITE-ProRule" id="PRU00691"/>
    </source>
</evidence>
<evidence type="ECO:0000305" key="3"/>
<sequence length="205" mass="22233">MTMQFLIASNVLLWLALIGCAVLMLGLLRQVGLLHERSSPMGAMITDHGPDVGDAAPTFDLPDHSGAMVRIGGPSALKRPTLLMFTAPTCPVCDKLFPLIKSIARAEKFSVVMISDGQPDEHQRFLAKHELGDIRYVVSAEVGMAFQVGKIPYGVLLDPEGVIRAKGLTNTREHLESLLEADKSGFASIQQFMTSRKHSHDAKAA</sequence>
<protein>
    <recommendedName>
        <fullName>Methylamine utilization protein MauD</fullName>
    </recommendedName>
</protein>
<feature type="chain" id="PRO_0000208927" description="Methylamine utilization protein MauD">
    <location>
        <begin position="1"/>
        <end position="205"/>
    </location>
</feature>
<feature type="transmembrane region" description="Helical" evidence="1">
    <location>
        <begin position="5"/>
        <end position="25"/>
    </location>
</feature>
<feature type="domain" description="Thioredoxin" evidence="2">
    <location>
        <begin position="50"/>
        <end position="184"/>
    </location>
</feature>
<feature type="sequence conflict" description="In Ref. 3." evidence="3" ref="3">
    <original>ESLL</original>
    <variation>CLQV</variation>
    <location>
        <begin position="176"/>
        <end position="179"/>
    </location>
</feature>
<organism>
    <name type="scientific">Methylorubrum extorquens (strain ATCC 14718 / DSM 1338 / JCM 2805 / NCIMB 9133 / AM1)</name>
    <name type="common">Methylobacterium extorquens</name>
    <dbReference type="NCBI Taxonomy" id="272630"/>
    <lineage>
        <taxon>Bacteria</taxon>
        <taxon>Pseudomonadati</taxon>
        <taxon>Pseudomonadota</taxon>
        <taxon>Alphaproteobacteria</taxon>
        <taxon>Hyphomicrobiales</taxon>
        <taxon>Methylobacteriaceae</taxon>
        <taxon>Methylorubrum</taxon>
    </lineage>
</organism>
<reference key="1">
    <citation type="journal article" date="1994" name="J. Bacteriol.">
        <title>Genetic organization of the mau gene cluster in Methylobacterium extorquens AM1: complete nucleotide sequence and generation and characteristics of mau mutants.</title>
        <authorList>
            <person name="Chistoserdov A.Y."/>
            <person name="Chistoserdova L.V."/>
            <person name="McIntire W.S."/>
            <person name="Lidstrom M.E."/>
        </authorList>
    </citation>
    <scope>NUCLEOTIDE SEQUENCE [GENOMIC DNA]</scope>
</reference>
<reference key="2">
    <citation type="journal article" date="2009" name="PLoS ONE">
        <title>Methylobacterium genome sequences: a reference blueprint to investigate microbial metabolism of C1 compounds from natural and industrial sources.</title>
        <authorList>
            <person name="Vuilleumier S."/>
            <person name="Chistoserdova L."/>
            <person name="Lee M.-C."/>
            <person name="Bringel F."/>
            <person name="Lajus A."/>
            <person name="Zhou Y."/>
            <person name="Gourion B."/>
            <person name="Barbe V."/>
            <person name="Chang J."/>
            <person name="Cruveiller S."/>
            <person name="Dossat C."/>
            <person name="Gillett W."/>
            <person name="Gruffaz C."/>
            <person name="Haugen E."/>
            <person name="Hourcade E."/>
            <person name="Levy R."/>
            <person name="Mangenot S."/>
            <person name="Muller E."/>
            <person name="Nadalig T."/>
            <person name="Pagni M."/>
            <person name="Penny C."/>
            <person name="Peyraud R."/>
            <person name="Robinson D.G."/>
            <person name="Roche D."/>
            <person name="Rouy Z."/>
            <person name="Saenampechek C."/>
            <person name="Salvignol G."/>
            <person name="Vallenet D."/>
            <person name="Wu Z."/>
            <person name="Marx C.J."/>
            <person name="Vorholt J.A."/>
            <person name="Olson M.V."/>
            <person name="Kaul R."/>
            <person name="Weissenbach J."/>
            <person name="Medigue C."/>
            <person name="Lidstrom M.E."/>
        </authorList>
    </citation>
    <scope>NUCLEOTIDE SEQUENCE [LARGE SCALE GENOMIC DNA]</scope>
    <source>
        <strain>ATCC 14718 / DSM 1338 / JCM 2805 / NCIMB 9133 / AM1</strain>
    </source>
</reference>
<reference key="3">
    <citation type="journal article" date="1991" name="J. Bacteriol.">
        <title>The small-subunit polypeptide of methylamine dehydrogenase from Methylobacterium extorquens AM1 has an unusual leader sequence.</title>
        <authorList>
            <person name="Chistoserdov A.Y."/>
            <person name="Lidstrom M.E."/>
        </authorList>
    </citation>
    <scope>NUCLEOTIDE SEQUENCE [GENOMIC DNA] OF 176-205</scope>
</reference>